<feature type="chain" id="PRO_1000143480" description="ATP synthase subunit beta">
    <location>
        <begin position="1"/>
        <end position="464"/>
    </location>
</feature>
<feature type="binding site" evidence="1">
    <location>
        <begin position="153"/>
        <end position="160"/>
    </location>
    <ligand>
        <name>ATP</name>
        <dbReference type="ChEBI" id="CHEBI:30616"/>
    </ligand>
</feature>
<keyword id="KW-0066">ATP synthesis</keyword>
<keyword id="KW-0067">ATP-binding</keyword>
<keyword id="KW-0997">Cell inner membrane</keyword>
<keyword id="KW-1003">Cell membrane</keyword>
<keyword id="KW-0139">CF(1)</keyword>
<keyword id="KW-0375">Hydrogen ion transport</keyword>
<keyword id="KW-0406">Ion transport</keyword>
<keyword id="KW-0472">Membrane</keyword>
<keyword id="KW-0547">Nucleotide-binding</keyword>
<keyword id="KW-1278">Translocase</keyword>
<keyword id="KW-0813">Transport</keyword>
<evidence type="ECO:0000255" key="1">
    <source>
        <dbReference type="HAMAP-Rule" id="MF_01347"/>
    </source>
</evidence>
<accession>B1JSV7</accession>
<gene>
    <name evidence="1" type="primary">atpD</name>
    <name type="ordered locus">Bcenmc03_0122</name>
</gene>
<reference key="1">
    <citation type="submission" date="2008-02" db="EMBL/GenBank/DDBJ databases">
        <title>Complete sequence of chromosome 1 of Burkholderia cenocepacia MC0-3.</title>
        <authorList>
            <person name="Copeland A."/>
            <person name="Lucas S."/>
            <person name="Lapidus A."/>
            <person name="Barry K."/>
            <person name="Bruce D."/>
            <person name="Goodwin L."/>
            <person name="Glavina del Rio T."/>
            <person name="Dalin E."/>
            <person name="Tice H."/>
            <person name="Pitluck S."/>
            <person name="Chain P."/>
            <person name="Malfatti S."/>
            <person name="Shin M."/>
            <person name="Vergez L."/>
            <person name="Schmutz J."/>
            <person name="Larimer F."/>
            <person name="Land M."/>
            <person name="Hauser L."/>
            <person name="Kyrpides N."/>
            <person name="Mikhailova N."/>
            <person name="Tiedje J."/>
            <person name="Richardson P."/>
        </authorList>
    </citation>
    <scope>NUCLEOTIDE SEQUENCE [LARGE SCALE GENOMIC DNA]</scope>
    <source>
        <strain>MC0-3</strain>
    </source>
</reference>
<organism>
    <name type="scientific">Burkholderia orbicola (strain MC0-3)</name>
    <dbReference type="NCBI Taxonomy" id="406425"/>
    <lineage>
        <taxon>Bacteria</taxon>
        <taxon>Pseudomonadati</taxon>
        <taxon>Pseudomonadota</taxon>
        <taxon>Betaproteobacteria</taxon>
        <taxon>Burkholderiales</taxon>
        <taxon>Burkholderiaceae</taxon>
        <taxon>Burkholderia</taxon>
        <taxon>Burkholderia cepacia complex</taxon>
        <taxon>Burkholderia orbicola</taxon>
    </lineage>
</organism>
<name>ATPB_BURO0</name>
<dbReference type="EC" id="7.1.2.2" evidence="1"/>
<dbReference type="EMBL" id="CP000958">
    <property type="protein sequence ID" value="ACA89302.1"/>
    <property type="molecule type" value="Genomic_DNA"/>
</dbReference>
<dbReference type="RefSeq" id="WP_006477287.1">
    <property type="nucleotide sequence ID" value="NC_010508.1"/>
</dbReference>
<dbReference type="SMR" id="B1JSV7"/>
<dbReference type="GeneID" id="83046921"/>
<dbReference type="KEGG" id="bcm:Bcenmc03_0122"/>
<dbReference type="HOGENOM" id="CLU_022398_0_2_4"/>
<dbReference type="Proteomes" id="UP000002169">
    <property type="component" value="Chromosome 1"/>
</dbReference>
<dbReference type="GO" id="GO:0005886">
    <property type="term" value="C:plasma membrane"/>
    <property type="evidence" value="ECO:0007669"/>
    <property type="project" value="UniProtKB-SubCell"/>
</dbReference>
<dbReference type="GO" id="GO:0045259">
    <property type="term" value="C:proton-transporting ATP synthase complex"/>
    <property type="evidence" value="ECO:0007669"/>
    <property type="project" value="UniProtKB-KW"/>
</dbReference>
<dbReference type="GO" id="GO:0005524">
    <property type="term" value="F:ATP binding"/>
    <property type="evidence" value="ECO:0007669"/>
    <property type="project" value="UniProtKB-UniRule"/>
</dbReference>
<dbReference type="GO" id="GO:0016887">
    <property type="term" value="F:ATP hydrolysis activity"/>
    <property type="evidence" value="ECO:0007669"/>
    <property type="project" value="InterPro"/>
</dbReference>
<dbReference type="GO" id="GO:0046933">
    <property type="term" value="F:proton-transporting ATP synthase activity, rotational mechanism"/>
    <property type="evidence" value="ECO:0007669"/>
    <property type="project" value="UniProtKB-UniRule"/>
</dbReference>
<dbReference type="CDD" id="cd18110">
    <property type="entry name" value="ATP-synt_F1_beta_C"/>
    <property type="match status" value="1"/>
</dbReference>
<dbReference type="CDD" id="cd18115">
    <property type="entry name" value="ATP-synt_F1_beta_N"/>
    <property type="match status" value="1"/>
</dbReference>
<dbReference type="CDD" id="cd01133">
    <property type="entry name" value="F1-ATPase_beta_CD"/>
    <property type="match status" value="1"/>
</dbReference>
<dbReference type="FunFam" id="1.10.1140.10:FF:000001">
    <property type="entry name" value="ATP synthase subunit beta"/>
    <property type="match status" value="1"/>
</dbReference>
<dbReference type="FunFam" id="3.40.50.300:FF:000004">
    <property type="entry name" value="ATP synthase subunit beta"/>
    <property type="match status" value="1"/>
</dbReference>
<dbReference type="Gene3D" id="2.40.10.170">
    <property type="match status" value="1"/>
</dbReference>
<dbReference type="Gene3D" id="1.10.1140.10">
    <property type="entry name" value="Bovine Mitochondrial F1-atpase, Atp Synthase Beta Chain, Chain D, domain 3"/>
    <property type="match status" value="1"/>
</dbReference>
<dbReference type="Gene3D" id="3.40.50.300">
    <property type="entry name" value="P-loop containing nucleotide triphosphate hydrolases"/>
    <property type="match status" value="1"/>
</dbReference>
<dbReference type="HAMAP" id="MF_01347">
    <property type="entry name" value="ATP_synth_beta_bact"/>
    <property type="match status" value="1"/>
</dbReference>
<dbReference type="InterPro" id="IPR003593">
    <property type="entry name" value="AAA+_ATPase"/>
</dbReference>
<dbReference type="InterPro" id="IPR055190">
    <property type="entry name" value="ATP-synt_VA_C"/>
</dbReference>
<dbReference type="InterPro" id="IPR005722">
    <property type="entry name" value="ATP_synth_F1_bsu"/>
</dbReference>
<dbReference type="InterPro" id="IPR020003">
    <property type="entry name" value="ATPase_a/bsu_AS"/>
</dbReference>
<dbReference type="InterPro" id="IPR050053">
    <property type="entry name" value="ATPase_alpha/beta_chains"/>
</dbReference>
<dbReference type="InterPro" id="IPR004100">
    <property type="entry name" value="ATPase_F1/V1/A1_a/bsu_N"/>
</dbReference>
<dbReference type="InterPro" id="IPR036121">
    <property type="entry name" value="ATPase_F1/V1/A1_a/bsu_N_sf"/>
</dbReference>
<dbReference type="InterPro" id="IPR000194">
    <property type="entry name" value="ATPase_F1/V1/A1_a/bsu_nucl-bd"/>
</dbReference>
<dbReference type="InterPro" id="IPR024034">
    <property type="entry name" value="ATPase_F1/V1_b/a_C"/>
</dbReference>
<dbReference type="InterPro" id="IPR027417">
    <property type="entry name" value="P-loop_NTPase"/>
</dbReference>
<dbReference type="NCBIfam" id="TIGR01039">
    <property type="entry name" value="atpD"/>
    <property type="match status" value="1"/>
</dbReference>
<dbReference type="PANTHER" id="PTHR15184">
    <property type="entry name" value="ATP SYNTHASE"/>
    <property type="match status" value="1"/>
</dbReference>
<dbReference type="PANTHER" id="PTHR15184:SF71">
    <property type="entry name" value="ATP SYNTHASE SUBUNIT BETA, MITOCHONDRIAL"/>
    <property type="match status" value="1"/>
</dbReference>
<dbReference type="Pfam" id="PF00006">
    <property type="entry name" value="ATP-synt_ab"/>
    <property type="match status" value="1"/>
</dbReference>
<dbReference type="Pfam" id="PF02874">
    <property type="entry name" value="ATP-synt_ab_N"/>
    <property type="match status" value="1"/>
</dbReference>
<dbReference type="Pfam" id="PF22919">
    <property type="entry name" value="ATP-synt_VA_C"/>
    <property type="match status" value="1"/>
</dbReference>
<dbReference type="SMART" id="SM00382">
    <property type="entry name" value="AAA"/>
    <property type="match status" value="1"/>
</dbReference>
<dbReference type="SUPFAM" id="SSF47917">
    <property type="entry name" value="C-terminal domain of alpha and beta subunits of F1 ATP synthase"/>
    <property type="match status" value="1"/>
</dbReference>
<dbReference type="SUPFAM" id="SSF50615">
    <property type="entry name" value="N-terminal domain of alpha and beta subunits of F1 ATP synthase"/>
    <property type="match status" value="1"/>
</dbReference>
<dbReference type="SUPFAM" id="SSF52540">
    <property type="entry name" value="P-loop containing nucleoside triphosphate hydrolases"/>
    <property type="match status" value="1"/>
</dbReference>
<dbReference type="PROSITE" id="PS00152">
    <property type="entry name" value="ATPASE_ALPHA_BETA"/>
    <property type="match status" value="1"/>
</dbReference>
<proteinExistence type="inferred from homology"/>
<comment type="function">
    <text evidence="1">Produces ATP from ADP in the presence of a proton gradient across the membrane. The catalytic sites are hosted primarily by the beta subunits.</text>
</comment>
<comment type="catalytic activity">
    <reaction evidence="1">
        <text>ATP + H2O + 4 H(+)(in) = ADP + phosphate + 5 H(+)(out)</text>
        <dbReference type="Rhea" id="RHEA:57720"/>
        <dbReference type="ChEBI" id="CHEBI:15377"/>
        <dbReference type="ChEBI" id="CHEBI:15378"/>
        <dbReference type="ChEBI" id="CHEBI:30616"/>
        <dbReference type="ChEBI" id="CHEBI:43474"/>
        <dbReference type="ChEBI" id="CHEBI:456216"/>
        <dbReference type="EC" id="7.1.2.2"/>
    </reaction>
</comment>
<comment type="subunit">
    <text evidence="1">F-type ATPases have 2 components, CF(1) - the catalytic core - and CF(0) - the membrane proton channel. CF(1) has five subunits: alpha(3), beta(3), gamma(1), delta(1), epsilon(1). CF(0) has three main subunits: a(1), b(2) and c(9-12). The alpha and beta chains form an alternating ring which encloses part of the gamma chain. CF(1) is attached to CF(0) by a central stalk formed by the gamma and epsilon chains, while a peripheral stalk is formed by the delta and b chains.</text>
</comment>
<comment type="subcellular location">
    <subcellularLocation>
        <location evidence="1">Cell inner membrane</location>
        <topology evidence="1">Peripheral membrane protein</topology>
    </subcellularLocation>
</comment>
<comment type="similarity">
    <text evidence="1">Belongs to the ATPase alpha/beta chains family.</text>
</comment>
<protein>
    <recommendedName>
        <fullName evidence="1">ATP synthase subunit beta</fullName>
        <ecNumber evidence="1">7.1.2.2</ecNumber>
    </recommendedName>
    <alternativeName>
        <fullName evidence="1">ATP synthase F1 sector subunit beta</fullName>
    </alternativeName>
    <alternativeName>
        <fullName evidence="1">F-ATPase subunit beta</fullName>
    </alternativeName>
</protein>
<sequence length="464" mass="50583">MSTAALVEGKIVQCIGAVIDVEFPRDSMPKIYDALILDGSELTLEVQQQLGDGVVRTICLGASDGLRRGLTVKNTAKPISVPVGKPTLGRIMDVLGRPIDEAGPIESDVTRSIHQKAPAFDELSPSTELLETGIKVIDLICPFAKGGKVGLFGGAGVGKTVNMMELINNIAKEHGGYSVFAGVGERTREGNDFYHEMKDSNVLDKVALVYGQMNEPPGNRLRVALTGLTMAEHFRDEGLDVLFFVDNIYRFTLAGTEVSALLGRMPSAVGYQPTLAEEMGKLQERITSTKKGSITSVQAVYVPADDLTDPSPATTFGHLDATVVLSRDIASLGIYPAVDPLDSTSRQIDPNVIGEEHYSITRRVQQTLQRYKELRDIIAILGMDELSPEDKLSVARARKIQRFLSQPFHVAEVFTGSPGKYVPLKETIRGFKMIVDGECDHLPEQAFYMVGTIDEAFEKAKKIQ</sequence>